<name>MSRB_STAA3</name>
<dbReference type="EC" id="1.8.4.12" evidence="1"/>
<dbReference type="EMBL" id="CP000255">
    <property type="protein sequence ID" value="ABD21574.1"/>
    <property type="molecule type" value="Genomic_DNA"/>
</dbReference>
<dbReference type="RefSeq" id="WP_000913315.1">
    <property type="nucleotide sequence ID" value="NZ_CP027476.1"/>
</dbReference>
<dbReference type="SMR" id="Q2FH15"/>
<dbReference type="KEGG" id="saa:SAUSA300_1316"/>
<dbReference type="HOGENOM" id="CLU_031040_8_5_9"/>
<dbReference type="OMA" id="DEQWRAE"/>
<dbReference type="Proteomes" id="UP000001939">
    <property type="component" value="Chromosome"/>
</dbReference>
<dbReference type="GO" id="GO:0005737">
    <property type="term" value="C:cytoplasm"/>
    <property type="evidence" value="ECO:0007669"/>
    <property type="project" value="TreeGrafter"/>
</dbReference>
<dbReference type="GO" id="GO:0033743">
    <property type="term" value="F:peptide-methionine (R)-S-oxide reductase activity"/>
    <property type="evidence" value="ECO:0007669"/>
    <property type="project" value="UniProtKB-UniRule"/>
</dbReference>
<dbReference type="GO" id="GO:0030091">
    <property type="term" value="P:protein repair"/>
    <property type="evidence" value="ECO:0007669"/>
    <property type="project" value="InterPro"/>
</dbReference>
<dbReference type="GO" id="GO:0006979">
    <property type="term" value="P:response to oxidative stress"/>
    <property type="evidence" value="ECO:0007669"/>
    <property type="project" value="InterPro"/>
</dbReference>
<dbReference type="FunFam" id="2.170.150.20:FF:000003">
    <property type="entry name" value="Peptide methionine sulfoxide reductase MsrB"/>
    <property type="match status" value="1"/>
</dbReference>
<dbReference type="Gene3D" id="2.170.150.20">
    <property type="entry name" value="Peptide methionine sulfoxide reductase"/>
    <property type="match status" value="1"/>
</dbReference>
<dbReference type="HAMAP" id="MF_01400">
    <property type="entry name" value="MsrB"/>
    <property type="match status" value="1"/>
</dbReference>
<dbReference type="InterPro" id="IPR028427">
    <property type="entry name" value="Met_Sox_Rdtase_MsrB"/>
</dbReference>
<dbReference type="InterPro" id="IPR002579">
    <property type="entry name" value="Met_Sox_Rdtase_MsrB_dom"/>
</dbReference>
<dbReference type="InterPro" id="IPR011057">
    <property type="entry name" value="Mss4-like_sf"/>
</dbReference>
<dbReference type="NCBIfam" id="TIGR00357">
    <property type="entry name" value="peptide-methionine (R)-S-oxide reductase MsrB"/>
    <property type="match status" value="1"/>
</dbReference>
<dbReference type="PANTHER" id="PTHR10173">
    <property type="entry name" value="METHIONINE SULFOXIDE REDUCTASE"/>
    <property type="match status" value="1"/>
</dbReference>
<dbReference type="PANTHER" id="PTHR10173:SF59">
    <property type="entry name" value="PEPTIDE METHIONINE SULFOXIDE REDUCTASE MSRA_MSRB"/>
    <property type="match status" value="1"/>
</dbReference>
<dbReference type="Pfam" id="PF01641">
    <property type="entry name" value="SelR"/>
    <property type="match status" value="1"/>
</dbReference>
<dbReference type="SUPFAM" id="SSF51316">
    <property type="entry name" value="Mss4-like"/>
    <property type="match status" value="1"/>
</dbReference>
<dbReference type="PROSITE" id="PS51790">
    <property type="entry name" value="MSRB"/>
    <property type="match status" value="1"/>
</dbReference>
<accession>Q2FH15</accession>
<protein>
    <recommendedName>
        <fullName evidence="1">Peptide methionine sulfoxide reductase MsrB</fullName>
        <ecNumber evidence="1">1.8.4.12</ecNumber>
    </recommendedName>
    <alternativeName>
        <fullName evidence="1">Peptide-methionine (R)-S-oxide reductase</fullName>
    </alternativeName>
</protein>
<reference key="1">
    <citation type="journal article" date="2006" name="Lancet">
        <title>Complete genome sequence of USA300, an epidemic clone of community-acquired meticillin-resistant Staphylococcus aureus.</title>
        <authorList>
            <person name="Diep B.A."/>
            <person name="Gill S.R."/>
            <person name="Chang R.F."/>
            <person name="Phan T.H."/>
            <person name="Chen J.H."/>
            <person name="Davidson M.G."/>
            <person name="Lin F."/>
            <person name="Lin J."/>
            <person name="Carleton H.A."/>
            <person name="Mongodin E.F."/>
            <person name="Sensabaugh G.F."/>
            <person name="Perdreau-Remington F."/>
        </authorList>
    </citation>
    <scope>NUCLEOTIDE SEQUENCE [LARGE SCALE GENOMIC DNA]</scope>
    <source>
        <strain>USA300</strain>
    </source>
</reference>
<proteinExistence type="inferred from homology"/>
<sequence>MLKKDKSELTDIEYIVTQENGTEPPFMNEYWNHFAKGIYVDKISGKPLFTSEEKFHSECGWPSFSKALDDDEIIELVDKSFGMLRTEVRSEESNSHLGHVFNDGPKESGGLRYCINSAAIQFIPYEKLEELGYGDLISHFDK</sequence>
<organism>
    <name type="scientific">Staphylococcus aureus (strain USA300)</name>
    <dbReference type="NCBI Taxonomy" id="367830"/>
    <lineage>
        <taxon>Bacteria</taxon>
        <taxon>Bacillati</taxon>
        <taxon>Bacillota</taxon>
        <taxon>Bacilli</taxon>
        <taxon>Bacillales</taxon>
        <taxon>Staphylococcaceae</taxon>
        <taxon>Staphylococcus</taxon>
    </lineage>
</organism>
<gene>
    <name evidence="1" type="primary">msrB</name>
    <name type="ordered locus">SAUSA300_1316</name>
</gene>
<evidence type="ECO:0000255" key="1">
    <source>
        <dbReference type="HAMAP-Rule" id="MF_01400"/>
    </source>
</evidence>
<evidence type="ECO:0000255" key="2">
    <source>
        <dbReference type="PROSITE-ProRule" id="PRU01126"/>
    </source>
</evidence>
<feature type="chain" id="PRO_1000068296" description="Peptide methionine sulfoxide reductase MsrB">
    <location>
        <begin position="1"/>
        <end position="142"/>
    </location>
</feature>
<feature type="domain" description="MsrB" evidence="2">
    <location>
        <begin position="2"/>
        <end position="125"/>
    </location>
</feature>
<feature type="active site" description="Nucleophile" evidence="2">
    <location>
        <position position="114"/>
    </location>
</feature>
<keyword id="KW-0560">Oxidoreductase</keyword>
<comment type="catalytic activity">
    <reaction evidence="1">
        <text>L-methionyl-[protein] + [thioredoxin]-disulfide + H2O = L-methionyl-(R)-S-oxide-[protein] + [thioredoxin]-dithiol</text>
        <dbReference type="Rhea" id="RHEA:24164"/>
        <dbReference type="Rhea" id="RHEA-COMP:10698"/>
        <dbReference type="Rhea" id="RHEA-COMP:10700"/>
        <dbReference type="Rhea" id="RHEA-COMP:12313"/>
        <dbReference type="Rhea" id="RHEA-COMP:12314"/>
        <dbReference type="ChEBI" id="CHEBI:15377"/>
        <dbReference type="ChEBI" id="CHEBI:16044"/>
        <dbReference type="ChEBI" id="CHEBI:29950"/>
        <dbReference type="ChEBI" id="CHEBI:45764"/>
        <dbReference type="ChEBI" id="CHEBI:50058"/>
        <dbReference type="EC" id="1.8.4.12"/>
    </reaction>
</comment>
<comment type="similarity">
    <text evidence="1">Belongs to the MsrB Met sulfoxide reductase family.</text>
</comment>